<sequence length="234" mass="26566">MAKTRPGVASKIKTGRKELDSYTIKGTNKVVRAGDCVLMRPSDAGKPPYVARVEKIEADARNNVKVHCRWYYRPEESLGGRRQFHGAKELFLSDHFDVQSAHTIEGKCIVHTFKNYTRLENVGAEDYYCRFEYKAATGAFTPDRVAVYCKCEMPYNPDDLMVQCEGCKDWYHPACVGMTIEEAKKLDHFVCAECSSDDDVKKSQNGFTSSPADDVKVRLSLFSHLLYRCSITYL</sequence>
<comment type="function">
    <text evidence="3 4 5">Chromatin remodeling factor that binds to methylated histone (e.g. H3K4me2/3) to prevent their acetylation (e.g. H3K9K14Ac), likely by recruiting histone deacetylase (HDAC) complexes, and thus regulating the transcription of target genes (PubMed:25281686). Negative regulator in developmental processes in a gibberellic acid- (GA-) dependent manner, such as germination, flowering induction, and flower organ specification, probably by modulating developmental gene expression (PubMed:11340178, PubMed:25281686). Involved in the chromatin-mediated repression of floral initiation and controls genes regulating flowering (PubMed:25281686). Negatively regulates the expression of the floral integrator FT epigenetically, by preventing high levels of H3 acetylation, thus maintaining an inactive chromatin conformation at FT locus (PubMed:12837946, PubMed:25281686).</text>
</comment>
<comment type="subunit">
    <text evidence="5">Recognizes di- and trimethylated histone H3 at lysine 4 (H3K4me2 and H3K4me3). Interacts with HDA6.</text>
</comment>
<comment type="subcellular location">
    <subcellularLocation>
        <location evidence="4">Nucleus</location>
    </subcellularLocation>
</comment>
<comment type="alternative products">
    <event type="alternative splicing"/>
    <isoform>
        <id>F4JL28-1</id>
        <name>1</name>
        <sequence type="displayed"/>
    </isoform>
    <isoform>
        <id>F4JL28-2</id>
        <name>2</name>
        <sequence type="described" ref="VSP_057983"/>
    </isoform>
</comment>
<comment type="tissue specificity">
    <text evidence="4 5">Expressed ubiquitously, with higher levels in floral buds.</text>
</comment>
<comment type="developmental stage">
    <text evidence="4 5">Expressed at all stages of development, from seedlings to adult reproductive phase, throughout the shoot apical meristem and young primordia.</text>
</comment>
<comment type="disruption phenotype">
    <text evidence="3 4 5">Higher H3K9K14 acetylation in the genomic region of the FT locus leading to an enhanced accumulation (PubMed:12837946, PubMed:25281686). In ebs-2, acceleration of flowering associated with a shorter adult vegetative phase (PubMed:11340178, PubMed:12837946, PubMed:25281686). Other developmental defects include smaller leaves and siliques, reduction in seed dormancy, plant size, and fertility, and partial suppression of LEAFY disruption (e.g. lfy-6) effects (PubMed:11340178, PubMed:25281686).</text>
</comment>
<comment type="similarity">
    <text evidence="7">Belongs to the SHL1/EBS protein family.</text>
</comment>
<comment type="sequence caution" evidence="7">
    <conflict type="erroneous gene model prediction">
        <sequence resource="EMBL-CDS" id="CAA18117"/>
    </conflict>
</comment>
<comment type="sequence caution" evidence="7">
    <conflict type="erroneous gene model prediction">
        <sequence resource="EMBL-CDS" id="CAB79169"/>
    </conflict>
</comment>
<feature type="chain" id="PRO_0000434827" description="Chromatin remodeling protein EBS">
    <location>
        <begin position="1"/>
        <end position="234"/>
    </location>
</feature>
<feature type="domain" description="BAH" evidence="2">
    <location>
        <begin position="29"/>
        <end position="144"/>
    </location>
</feature>
<feature type="zinc finger region" description="PHD-type" evidence="1">
    <location>
        <begin position="146"/>
        <end position="197"/>
    </location>
</feature>
<feature type="splice variant" id="VSP_057983" description="In isoform 2.">
    <original>RLSLFSHLLYRCSITYL</original>
    <variation>ETKRRKR</variation>
    <location>
        <begin position="218"/>
        <end position="234"/>
    </location>
</feature>
<feature type="mutagenesis site" description="In ebs-1; early flowering, especially under short-day photoperiods, reduction in seed dormancy, plant size, and fertility, and partial suppression of LEAFY disruption (e.g. lfy-6) effects." evidence="3 4">
    <original>P</original>
    <variation>L</variation>
    <location>
        <position position="41"/>
    </location>
</feature>
<feature type="mutagenesis site" description="Impaired H3K4me2/3 binding." evidence="5">
    <original>W</original>
    <variation>A</variation>
    <location>
        <position position="170"/>
    </location>
</feature>
<feature type="strand" evidence="12">
    <location>
        <begin position="17"/>
        <end position="23"/>
    </location>
</feature>
<feature type="strand" evidence="12">
    <location>
        <begin position="30"/>
        <end position="32"/>
    </location>
</feature>
<feature type="strand" evidence="11">
    <location>
        <begin position="36"/>
        <end position="39"/>
    </location>
</feature>
<feature type="strand" evidence="12">
    <location>
        <begin position="42"/>
        <end position="46"/>
    </location>
</feature>
<feature type="strand" evidence="11">
    <location>
        <begin position="49"/>
        <end position="58"/>
    </location>
</feature>
<feature type="strand" evidence="11">
    <location>
        <begin position="64"/>
        <end position="72"/>
    </location>
</feature>
<feature type="helix" evidence="11">
    <location>
        <begin position="74"/>
        <end position="76"/>
    </location>
</feature>
<feature type="strand" evidence="11">
    <location>
        <begin position="77"/>
        <end position="79"/>
    </location>
</feature>
<feature type="strand" evidence="11">
    <location>
        <begin position="89"/>
        <end position="100"/>
    </location>
</feature>
<feature type="helix" evidence="11">
    <location>
        <begin position="101"/>
        <end position="103"/>
    </location>
</feature>
<feature type="strand" evidence="11">
    <location>
        <begin position="104"/>
        <end position="112"/>
    </location>
</feature>
<feature type="helix" evidence="11">
    <location>
        <begin position="113"/>
        <end position="117"/>
    </location>
</feature>
<feature type="strand" evidence="11">
    <location>
        <begin position="126"/>
        <end position="133"/>
    </location>
</feature>
<feature type="turn" evidence="11">
    <location>
        <begin position="135"/>
        <end position="137"/>
    </location>
</feature>
<feature type="strand" evidence="11">
    <location>
        <begin position="140"/>
        <end position="143"/>
    </location>
</feature>
<feature type="turn" evidence="11">
    <location>
        <begin position="149"/>
        <end position="152"/>
    </location>
</feature>
<feature type="strand" evidence="12">
    <location>
        <begin position="161"/>
        <end position="163"/>
    </location>
</feature>
<feature type="turn" evidence="11">
    <location>
        <begin position="165"/>
        <end position="167"/>
    </location>
</feature>
<feature type="helix" evidence="11">
    <location>
        <begin position="173"/>
        <end position="176"/>
    </location>
</feature>
<feature type="helix" evidence="11">
    <location>
        <begin position="180"/>
        <end position="185"/>
    </location>
</feature>
<feature type="helix" evidence="12">
    <location>
        <begin position="192"/>
        <end position="194"/>
    </location>
</feature>
<feature type="helix" evidence="11">
    <location>
        <begin position="211"/>
        <end position="213"/>
    </location>
</feature>
<organism evidence="10">
    <name type="scientific">Arabidopsis thaliana</name>
    <name type="common">Mouse-ear cress</name>
    <dbReference type="NCBI Taxonomy" id="3702"/>
    <lineage>
        <taxon>Eukaryota</taxon>
        <taxon>Viridiplantae</taxon>
        <taxon>Streptophyta</taxon>
        <taxon>Embryophyta</taxon>
        <taxon>Tracheophyta</taxon>
        <taxon>Spermatophyta</taxon>
        <taxon>Magnoliopsida</taxon>
        <taxon>eudicotyledons</taxon>
        <taxon>Gunneridae</taxon>
        <taxon>Pentapetalae</taxon>
        <taxon>rosids</taxon>
        <taxon>malvids</taxon>
        <taxon>Brassicales</taxon>
        <taxon>Brassicaceae</taxon>
        <taxon>Camelineae</taxon>
        <taxon>Arabidopsis</taxon>
    </lineage>
</organism>
<protein>
    <recommendedName>
        <fullName evidence="7">Chromatin remodeling protein EBS</fullName>
    </recommendedName>
    <alternativeName>
        <fullName evidence="6">Protein EARLY BOLTING IN SHORT DAYS</fullName>
    </alternativeName>
</protein>
<evidence type="ECO:0000255" key="1">
    <source>
        <dbReference type="PROSITE-ProRule" id="PRU00146"/>
    </source>
</evidence>
<evidence type="ECO:0000255" key="2">
    <source>
        <dbReference type="PROSITE-ProRule" id="PRU00370"/>
    </source>
</evidence>
<evidence type="ECO:0000269" key="3">
    <source>
    </source>
</evidence>
<evidence type="ECO:0000269" key="4">
    <source>
    </source>
</evidence>
<evidence type="ECO:0000269" key="5">
    <source>
    </source>
</evidence>
<evidence type="ECO:0000303" key="6">
    <source>
    </source>
</evidence>
<evidence type="ECO:0000305" key="7"/>
<evidence type="ECO:0000312" key="8">
    <source>
        <dbReference type="EMBL" id="AEE84562.1"/>
    </source>
</evidence>
<evidence type="ECO:0000312" key="9">
    <source>
        <dbReference type="EMBL" id="CAA18117.1"/>
    </source>
</evidence>
<evidence type="ECO:0000312" key="10">
    <source>
        <dbReference type="Proteomes" id="UP000006548"/>
    </source>
</evidence>
<evidence type="ECO:0007829" key="11">
    <source>
        <dbReference type="PDB" id="5Z8L"/>
    </source>
</evidence>
<evidence type="ECO:0007829" key="12">
    <source>
        <dbReference type="PDB" id="5Z8N"/>
    </source>
</evidence>
<accession>F4JL28</accession>
<accession>O65462</accession>
<accession>Q56W44</accession>
<accession>Q8H1R5</accession>
<name>EBS_ARATH</name>
<reference key="1">
    <citation type="journal article" date="1999" name="Nature">
        <title>Sequence and analysis of chromosome 4 of the plant Arabidopsis thaliana.</title>
        <authorList>
            <person name="Mayer K.F.X."/>
            <person name="Schueller C."/>
            <person name="Wambutt R."/>
            <person name="Murphy G."/>
            <person name="Volckaert G."/>
            <person name="Pohl T."/>
            <person name="Duesterhoeft A."/>
            <person name="Stiekema W."/>
            <person name="Entian K.-D."/>
            <person name="Terryn N."/>
            <person name="Harris B."/>
            <person name="Ansorge W."/>
            <person name="Brandt P."/>
            <person name="Grivell L.A."/>
            <person name="Rieger M."/>
            <person name="Weichselgartner M."/>
            <person name="de Simone V."/>
            <person name="Obermaier B."/>
            <person name="Mache R."/>
            <person name="Mueller M."/>
            <person name="Kreis M."/>
            <person name="Delseny M."/>
            <person name="Puigdomenech P."/>
            <person name="Watson M."/>
            <person name="Schmidtheini T."/>
            <person name="Reichert B."/>
            <person name="Portetelle D."/>
            <person name="Perez-Alonso M."/>
            <person name="Boutry M."/>
            <person name="Bancroft I."/>
            <person name="Vos P."/>
            <person name="Hoheisel J."/>
            <person name="Zimmermann W."/>
            <person name="Wedler H."/>
            <person name="Ridley P."/>
            <person name="Langham S.-A."/>
            <person name="McCullagh B."/>
            <person name="Bilham L."/>
            <person name="Robben J."/>
            <person name="van der Schueren J."/>
            <person name="Grymonprez B."/>
            <person name="Chuang Y.-J."/>
            <person name="Vandenbussche F."/>
            <person name="Braeken M."/>
            <person name="Weltjens I."/>
            <person name="Voet M."/>
            <person name="Bastiaens I."/>
            <person name="Aert R."/>
            <person name="Defoor E."/>
            <person name="Weitzenegger T."/>
            <person name="Bothe G."/>
            <person name="Ramsperger U."/>
            <person name="Hilbert H."/>
            <person name="Braun M."/>
            <person name="Holzer E."/>
            <person name="Brandt A."/>
            <person name="Peters S."/>
            <person name="van Staveren M."/>
            <person name="Dirkse W."/>
            <person name="Mooijman P."/>
            <person name="Klein Lankhorst R."/>
            <person name="Rose M."/>
            <person name="Hauf J."/>
            <person name="Koetter P."/>
            <person name="Berneiser S."/>
            <person name="Hempel S."/>
            <person name="Feldpausch M."/>
            <person name="Lamberth S."/>
            <person name="Van den Daele H."/>
            <person name="De Keyser A."/>
            <person name="Buysshaert C."/>
            <person name="Gielen J."/>
            <person name="Villarroel R."/>
            <person name="De Clercq R."/>
            <person name="van Montagu M."/>
            <person name="Rogers J."/>
            <person name="Cronin A."/>
            <person name="Quail M.A."/>
            <person name="Bray-Allen S."/>
            <person name="Clark L."/>
            <person name="Doggett J."/>
            <person name="Hall S."/>
            <person name="Kay M."/>
            <person name="Lennard N."/>
            <person name="McLay K."/>
            <person name="Mayes R."/>
            <person name="Pettett A."/>
            <person name="Rajandream M.A."/>
            <person name="Lyne M."/>
            <person name="Benes V."/>
            <person name="Rechmann S."/>
            <person name="Borkova D."/>
            <person name="Bloecker H."/>
            <person name="Scharfe M."/>
            <person name="Grimm M."/>
            <person name="Loehnert T.-H."/>
            <person name="Dose S."/>
            <person name="de Haan M."/>
            <person name="Maarse A.C."/>
            <person name="Schaefer M."/>
            <person name="Mueller-Auer S."/>
            <person name="Gabel C."/>
            <person name="Fuchs M."/>
            <person name="Fartmann B."/>
            <person name="Granderath K."/>
            <person name="Dauner D."/>
            <person name="Herzl A."/>
            <person name="Neumann S."/>
            <person name="Argiriou A."/>
            <person name="Vitale D."/>
            <person name="Liguori R."/>
            <person name="Piravandi E."/>
            <person name="Massenet O."/>
            <person name="Quigley F."/>
            <person name="Clabauld G."/>
            <person name="Muendlein A."/>
            <person name="Felber R."/>
            <person name="Schnabl S."/>
            <person name="Hiller R."/>
            <person name="Schmidt W."/>
            <person name="Lecharny A."/>
            <person name="Aubourg S."/>
            <person name="Chefdor F."/>
            <person name="Cooke R."/>
            <person name="Berger C."/>
            <person name="Monfort A."/>
            <person name="Casacuberta E."/>
            <person name="Gibbons T."/>
            <person name="Weber N."/>
            <person name="Vandenbol M."/>
            <person name="Bargues M."/>
            <person name="Terol J."/>
            <person name="Torres A."/>
            <person name="Perez-Perez A."/>
            <person name="Purnelle B."/>
            <person name="Bent E."/>
            <person name="Johnson S."/>
            <person name="Tacon D."/>
            <person name="Jesse T."/>
            <person name="Heijnen L."/>
            <person name="Schwarz S."/>
            <person name="Scholler P."/>
            <person name="Heber S."/>
            <person name="Francs P."/>
            <person name="Bielke C."/>
            <person name="Frishman D."/>
            <person name="Haase D."/>
            <person name="Lemcke K."/>
            <person name="Mewes H.-W."/>
            <person name="Stocker S."/>
            <person name="Zaccaria P."/>
            <person name="Bevan M."/>
            <person name="Wilson R.K."/>
            <person name="de la Bastide M."/>
            <person name="Habermann K."/>
            <person name="Parnell L."/>
            <person name="Dedhia N."/>
            <person name="Gnoj L."/>
            <person name="Schutz K."/>
            <person name="Huang E."/>
            <person name="Spiegel L."/>
            <person name="Sekhon M."/>
            <person name="Murray J."/>
            <person name="Sheet P."/>
            <person name="Cordes M."/>
            <person name="Abu-Threideh J."/>
            <person name="Stoneking T."/>
            <person name="Kalicki J."/>
            <person name="Graves T."/>
            <person name="Harmon G."/>
            <person name="Edwards J."/>
            <person name="Latreille P."/>
            <person name="Courtney L."/>
            <person name="Cloud J."/>
            <person name="Abbott A."/>
            <person name="Scott K."/>
            <person name="Johnson D."/>
            <person name="Minx P."/>
            <person name="Bentley D."/>
            <person name="Fulton B."/>
            <person name="Miller N."/>
            <person name="Greco T."/>
            <person name="Kemp K."/>
            <person name="Kramer J."/>
            <person name="Fulton L."/>
            <person name="Mardis E."/>
            <person name="Dante M."/>
            <person name="Pepin K."/>
            <person name="Hillier L.W."/>
            <person name="Nelson J."/>
            <person name="Spieth J."/>
            <person name="Ryan E."/>
            <person name="Andrews S."/>
            <person name="Geisel C."/>
            <person name="Layman D."/>
            <person name="Du H."/>
            <person name="Ali J."/>
            <person name="Berghoff A."/>
            <person name="Jones K."/>
            <person name="Drone K."/>
            <person name="Cotton M."/>
            <person name="Joshu C."/>
            <person name="Antonoiu B."/>
            <person name="Zidanic M."/>
            <person name="Strong C."/>
            <person name="Sun H."/>
            <person name="Lamar B."/>
            <person name="Yordan C."/>
            <person name="Ma P."/>
            <person name="Zhong J."/>
            <person name="Preston R."/>
            <person name="Vil D."/>
            <person name="Shekher M."/>
            <person name="Matero A."/>
            <person name="Shah R."/>
            <person name="Swaby I.K."/>
            <person name="O'Shaughnessy A."/>
            <person name="Rodriguez M."/>
            <person name="Hoffman J."/>
            <person name="Till S."/>
            <person name="Granat S."/>
            <person name="Shohdy N."/>
            <person name="Hasegawa A."/>
            <person name="Hameed A."/>
            <person name="Lodhi M."/>
            <person name="Johnson A."/>
            <person name="Chen E."/>
            <person name="Marra M.A."/>
            <person name="Martienssen R."/>
            <person name="McCombie W.R."/>
        </authorList>
    </citation>
    <scope>NUCLEOTIDE SEQUENCE [LARGE SCALE GENOMIC DNA]</scope>
    <source>
        <strain>cv. Columbia</strain>
    </source>
</reference>
<reference key="2">
    <citation type="journal article" date="2017" name="Plant J.">
        <title>Araport11: a complete reannotation of the Arabidopsis thaliana reference genome.</title>
        <authorList>
            <person name="Cheng C.Y."/>
            <person name="Krishnakumar V."/>
            <person name="Chan A.P."/>
            <person name="Thibaud-Nissen F."/>
            <person name="Schobel S."/>
            <person name="Town C.D."/>
        </authorList>
    </citation>
    <scope>GENOME REANNOTATION</scope>
    <source>
        <strain>cv. Columbia</strain>
    </source>
</reference>
<reference key="3">
    <citation type="submission" date="2005-03" db="EMBL/GenBank/DDBJ databases">
        <title>Large-scale analysis of RIKEN Arabidopsis full-length (RAFL) cDNAs.</title>
        <authorList>
            <person name="Totoki Y."/>
            <person name="Seki M."/>
            <person name="Ishida J."/>
            <person name="Nakajima M."/>
            <person name="Enju A."/>
            <person name="Kamiya A."/>
            <person name="Narusaka M."/>
            <person name="Shin-i T."/>
            <person name="Nakagawa M."/>
            <person name="Sakamoto N."/>
            <person name="Oishi K."/>
            <person name="Kohara Y."/>
            <person name="Kobayashi M."/>
            <person name="Toyoda A."/>
            <person name="Sakaki Y."/>
            <person name="Sakurai T."/>
            <person name="Iida K."/>
            <person name="Akiyama K."/>
            <person name="Satou M."/>
            <person name="Toyoda T."/>
            <person name="Konagaya A."/>
            <person name="Carninci P."/>
            <person name="Kawai J."/>
            <person name="Hayashizaki Y."/>
            <person name="Shinozaki K."/>
        </authorList>
    </citation>
    <scope>NUCLEOTIDE SEQUENCE [LARGE SCALE MRNA] (ISOFORM 2)</scope>
    <source>
        <strain>cv. Columbia</strain>
    </source>
</reference>
<reference key="4">
    <citation type="journal article" date="2003" name="Science">
        <title>Empirical analysis of transcriptional activity in the Arabidopsis genome.</title>
        <authorList>
            <person name="Yamada K."/>
            <person name="Lim J."/>
            <person name="Dale J.M."/>
            <person name="Chen H."/>
            <person name="Shinn P."/>
            <person name="Palm C.J."/>
            <person name="Southwick A.M."/>
            <person name="Wu H.C."/>
            <person name="Kim C.J."/>
            <person name="Nguyen M."/>
            <person name="Pham P.K."/>
            <person name="Cheuk R.F."/>
            <person name="Karlin-Newmann G."/>
            <person name="Liu S.X."/>
            <person name="Lam B."/>
            <person name="Sakano H."/>
            <person name="Wu T."/>
            <person name="Yu G."/>
            <person name="Miranda M."/>
            <person name="Quach H.L."/>
            <person name="Tripp M."/>
            <person name="Chang C.H."/>
            <person name="Lee J.M."/>
            <person name="Toriumi M.J."/>
            <person name="Chan M.M."/>
            <person name="Tang C.C."/>
            <person name="Onodera C.S."/>
            <person name="Deng J.M."/>
            <person name="Akiyama K."/>
            <person name="Ansari Y."/>
            <person name="Arakawa T."/>
            <person name="Banh J."/>
            <person name="Banno F."/>
            <person name="Bowser L."/>
            <person name="Brooks S.Y."/>
            <person name="Carninci P."/>
            <person name="Chao Q."/>
            <person name="Choy N."/>
            <person name="Enju A."/>
            <person name="Goldsmith A.D."/>
            <person name="Gurjal M."/>
            <person name="Hansen N.F."/>
            <person name="Hayashizaki Y."/>
            <person name="Johnson-Hopson C."/>
            <person name="Hsuan V.W."/>
            <person name="Iida K."/>
            <person name="Karnes M."/>
            <person name="Khan S."/>
            <person name="Koesema E."/>
            <person name="Ishida J."/>
            <person name="Jiang P.X."/>
            <person name="Jones T."/>
            <person name="Kawai J."/>
            <person name="Kamiya A."/>
            <person name="Meyers C."/>
            <person name="Nakajima M."/>
            <person name="Narusaka M."/>
            <person name="Seki M."/>
            <person name="Sakurai T."/>
            <person name="Satou M."/>
            <person name="Tamse R."/>
            <person name="Vaysberg M."/>
            <person name="Wallender E.K."/>
            <person name="Wong C."/>
            <person name="Yamamura Y."/>
            <person name="Yuan S."/>
            <person name="Shinozaki K."/>
            <person name="Davis R.W."/>
            <person name="Theologis A."/>
            <person name="Ecker J.R."/>
        </authorList>
    </citation>
    <scope>NUCLEOTIDE SEQUENCE [LARGE SCALE MRNA] OF 39-234 (ISOFORM 1)</scope>
    <source>
        <strain>cv. Columbia</strain>
    </source>
</reference>
<reference key="5">
    <citation type="journal article" date="2001" name="Plant Cell">
        <title>early bolting in short days: an Arabidopsis mutation that causes early flowering and partially suppresses the floral phenotype of leafy.</title>
        <authorList>
            <person name="Gomez-Mena C."/>
            <person name="Pineiro M."/>
            <person name="Franco-Zorrilla J.M."/>
            <person name="Salinas J."/>
            <person name="Coupland G."/>
            <person name="Martinez-Zapater J.M."/>
        </authorList>
    </citation>
    <scope>FUNCTION</scope>
    <scope>DISRUPTION PHENOTYPE</scope>
    <scope>MUTAGENESIS OF PRO-41</scope>
    <source>
        <strain>cv. Landsberg erecta</strain>
    </source>
</reference>
<reference key="6">
    <citation type="journal article" date="2003" name="Plant Cell">
        <title>EARLY BOLTING IN SHORT DAYS is related to chromatin remodeling factors and regulates flowering in Arabidopsis by repressing FT.</title>
        <authorList>
            <person name="Pineiro M."/>
            <person name="Gomez-Mena C."/>
            <person name="Schaffer R."/>
            <person name="Martinez-Zapater J.M."/>
            <person name="Coupland G."/>
        </authorList>
    </citation>
    <scope>FUNCTION</scope>
    <scope>DISRUPTION PHENOTYPE</scope>
    <scope>MUTAGENESIS OF PRO-41</scope>
    <scope>SUBCELLULAR LOCATION</scope>
    <scope>TISSUE SPECIFICITY</scope>
    <scope>DEVELOPMENTAL STAGE</scope>
    <source>
        <strain>cv. Landsberg erecta</strain>
    </source>
</reference>
<reference key="7">
    <citation type="journal article" date="2009" name="J. Proteomics">
        <title>Phosphoproteomic analysis of nuclei-enriched fractions from Arabidopsis thaliana.</title>
        <authorList>
            <person name="Jones A.M.E."/>
            <person name="MacLean D."/>
            <person name="Studholme D.J."/>
            <person name="Serna-Sanz A."/>
            <person name="Andreasson E."/>
            <person name="Rathjen J.P."/>
            <person name="Peck S.C."/>
        </authorList>
    </citation>
    <scope>IDENTIFICATION BY MASS SPECTROMETRY [LARGE SCALE ANALYSIS]</scope>
    <source>
        <strain>cv. Columbia</strain>
    </source>
</reference>
<reference key="8">
    <citation type="journal article" date="2009" name="Plant Physiol.">
        <title>Large-scale Arabidopsis phosphoproteome profiling reveals novel chloroplast kinase substrates and phosphorylation networks.</title>
        <authorList>
            <person name="Reiland S."/>
            <person name="Messerli G."/>
            <person name="Baerenfaller K."/>
            <person name="Gerrits B."/>
            <person name="Endler A."/>
            <person name="Grossmann J."/>
            <person name="Gruissem W."/>
            <person name="Baginsky S."/>
        </authorList>
    </citation>
    <scope>IDENTIFICATION BY MASS SPECTROMETRY [LARGE SCALE ANALYSIS]</scope>
</reference>
<reference key="9">
    <citation type="journal article" date="2014" name="Plant Cell">
        <title>Chromatin-dependent repression of the Arabidopsis floral integrator genes involves plant specific PHD-containing proteins.</title>
        <authorList>
            <person name="Lopez-Gonzalez L."/>
            <person name="Mouriz A."/>
            <person name="Narro-Diego L."/>
            <person name="Bustos R."/>
            <person name="Martinez-Zapater J.M."/>
            <person name="Jarillo J.A."/>
            <person name="Pineiro M."/>
        </authorList>
    </citation>
    <scope>FUNCTION</scope>
    <scope>MUTAGENESIS OF TRP-170</scope>
    <scope>DISRUPTION PHENOTYPE</scope>
    <scope>INTERACTION WITH HISTONE AND HDA6</scope>
    <scope>TISSUE SPECIFICITY</scope>
    <scope>DEVELOPMENTAL STAGE</scope>
    <source>
        <strain>cv. Columbia</strain>
        <strain>cv. Landsberg erecta</strain>
    </source>
</reference>
<dbReference type="EMBL" id="AL022140">
    <property type="protein sequence ID" value="CAA18117.1"/>
    <property type="status" value="ALT_SEQ"/>
    <property type="molecule type" value="Genomic_DNA"/>
</dbReference>
<dbReference type="EMBL" id="AL161556">
    <property type="protein sequence ID" value="CAB79169.1"/>
    <property type="status" value="ALT_SEQ"/>
    <property type="molecule type" value="Genomic_DNA"/>
</dbReference>
<dbReference type="EMBL" id="CP002687">
    <property type="protein sequence ID" value="AEE84562.1"/>
    <property type="molecule type" value="Genomic_DNA"/>
</dbReference>
<dbReference type="EMBL" id="CP002687">
    <property type="protein sequence ID" value="AEE84563.1"/>
    <property type="molecule type" value="Genomic_DNA"/>
</dbReference>
<dbReference type="EMBL" id="CP002687">
    <property type="protein sequence ID" value="ANM67164.1"/>
    <property type="molecule type" value="Genomic_DNA"/>
</dbReference>
<dbReference type="EMBL" id="AK222203">
    <property type="protein sequence ID" value="BAD95354.1"/>
    <property type="molecule type" value="mRNA"/>
</dbReference>
<dbReference type="EMBL" id="AY142507">
    <property type="protein sequence ID" value="AAN13058.1"/>
    <property type="molecule type" value="mRNA"/>
</dbReference>
<dbReference type="PIR" id="C85253">
    <property type="entry name" value="C85253"/>
</dbReference>
<dbReference type="PIR" id="T49121">
    <property type="entry name" value="T49121"/>
</dbReference>
<dbReference type="RefSeq" id="NP_001031695.1">
    <molecule id="F4JL28-2"/>
    <property type="nucleotide sequence ID" value="NM_001036618.3"/>
</dbReference>
<dbReference type="RefSeq" id="NP_001320030.1">
    <molecule id="F4JL28-1"/>
    <property type="nucleotide sequence ID" value="NM_001341530.1"/>
</dbReference>
<dbReference type="RefSeq" id="NP_193945.2">
    <molecule id="F4JL28-1"/>
    <property type="nucleotide sequence ID" value="NM_118335.5"/>
</dbReference>
<dbReference type="PDB" id="5Z8L">
    <property type="method" value="X-ray"/>
    <property type="resolution" value="2.00 A"/>
    <property type="chains" value="A=1-234"/>
</dbReference>
<dbReference type="PDB" id="5Z8N">
    <property type="method" value="X-ray"/>
    <property type="resolution" value="3.10 A"/>
    <property type="chains" value="A/B/C=1-199"/>
</dbReference>
<dbReference type="PDBsum" id="5Z8L"/>
<dbReference type="PDBsum" id="5Z8N"/>
<dbReference type="SMR" id="F4JL28"/>
<dbReference type="FunCoup" id="F4JL28">
    <property type="interactions" value="2021"/>
</dbReference>
<dbReference type="STRING" id="3702.F4JL28"/>
<dbReference type="iPTMnet" id="F4JL28"/>
<dbReference type="PaxDb" id="3702-AT4G22140.1"/>
<dbReference type="ProteomicsDB" id="222048">
    <molecule id="F4JL28-1"/>
</dbReference>
<dbReference type="EnsemblPlants" id="AT4G22140.1">
    <molecule id="F4JL28-1"/>
    <property type="protein sequence ID" value="AT4G22140.1"/>
    <property type="gene ID" value="AT4G22140"/>
</dbReference>
<dbReference type="EnsemblPlants" id="AT4G22140.2">
    <molecule id="F4JL28-2"/>
    <property type="protein sequence ID" value="AT4G22140.2"/>
    <property type="gene ID" value="AT4G22140"/>
</dbReference>
<dbReference type="EnsemblPlants" id="AT4G22140.3">
    <molecule id="F4JL28-1"/>
    <property type="protein sequence ID" value="AT4G22140.3"/>
    <property type="gene ID" value="AT4G22140"/>
</dbReference>
<dbReference type="GeneID" id="828303"/>
<dbReference type="Gramene" id="AT4G22140.1">
    <molecule id="F4JL28-1"/>
    <property type="protein sequence ID" value="AT4G22140.1"/>
    <property type="gene ID" value="AT4G22140"/>
</dbReference>
<dbReference type="Gramene" id="AT4G22140.2">
    <molecule id="F4JL28-2"/>
    <property type="protein sequence ID" value="AT4G22140.2"/>
    <property type="gene ID" value="AT4G22140"/>
</dbReference>
<dbReference type="Gramene" id="AT4G22140.3">
    <molecule id="F4JL28-1"/>
    <property type="protein sequence ID" value="AT4G22140.3"/>
    <property type="gene ID" value="AT4G22140"/>
</dbReference>
<dbReference type="KEGG" id="ath:AT4G22140"/>
<dbReference type="Araport" id="AT4G22140"/>
<dbReference type="TAIR" id="AT4G22140">
    <property type="gene designation" value="EBS"/>
</dbReference>
<dbReference type="eggNOG" id="KOG1632">
    <property type="taxonomic scope" value="Eukaryota"/>
</dbReference>
<dbReference type="eggNOG" id="KOG1886">
    <property type="taxonomic scope" value="Eukaryota"/>
</dbReference>
<dbReference type="InParanoid" id="F4JL28"/>
<dbReference type="OMA" id="FTCKEYV"/>
<dbReference type="PRO" id="PR:F4JL28"/>
<dbReference type="Proteomes" id="UP000006548">
    <property type="component" value="Chromosome 4"/>
</dbReference>
<dbReference type="ExpressionAtlas" id="F4JL28">
    <property type="expression patterns" value="baseline and differential"/>
</dbReference>
<dbReference type="GO" id="GO:0005634">
    <property type="term" value="C:nucleus"/>
    <property type="evidence" value="ECO:0000314"/>
    <property type="project" value="UniProtKB"/>
</dbReference>
<dbReference type="GO" id="GO:0003682">
    <property type="term" value="F:chromatin binding"/>
    <property type="evidence" value="ECO:0007669"/>
    <property type="project" value="InterPro"/>
</dbReference>
<dbReference type="GO" id="GO:0140002">
    <property type="term" value="F:histone H3K4me3 reader activity"/>
    <property type="evidence" value="ECO:0000314"/>
    <property type="project" value="UniProtKB"/>
</dbReference>
<dbReference type="GO" id="GO:0140678">
    <property type="term" value="F:molecular function inhibitor activity"/>
    <property type="evidence" value="ECO:0000315"/>
    <property type="project" value="DisProt"/>
</dbReference>
<dbReference type="GO" id="GO:0000976">
    <property type="term" value="F:transcription cis-regulatory region binding"/>
    <property type="evidence" value="ECO:0000314"/>
    <property type="project" value="UniProtKB"/>
</dbReference>
<dbReference type="GO" id="GO:0008270">
    <property type="term" value="F:zinc ion binding"/>
    <property type="evidence" value="ECO:0007669"/>
    <property type="project" value="UniProtKB-KW"/>
</dbReference>
<dbReference type="GO" id="GO:0009908">
    <property type="term" value="P:flower development"/>
    <property type="evidence" value="ECO:0007669"/>
    <property type="project" value="UniProtKB-KW"/>
</dbReference>
<dbReference type="GO" id="GO:0045814">
    <property type="term" value="P:negative regulation of gene expression, epigenetic"/>
    <property type="evidence" value="ECO:0000315"/>
    <property type="project" value="UniProtKB"/>
</dbReference>
<dbReference type="GO" id="GO:0048579">
    <property type="term" value="P:negative regulation of long-day photoperiodism, flowering"/>
    <property type="evidence" value="ECO:0000315"/>
    <property type="project" value="UniProtKB"/>
</dbReference>
<dbReference type="GO" id="GO:0009791">
    <property type="term" value="P:post-embryonic development"/>
    <property type="evidence" value="ECO:0000315"/>
    <property type="project" value="UniProtKB"/>
</dbReference>
<dbReference type="GO" id="GO:2000028">
    <property type="term" value="P:regulation of photoperiodism, flowering"/>
    <property type="evidence" value="ECO:0000315"/>
    <property type="project" value="UniProtKB"/>
</dbReference>
<dbReference type="GO" id="GO:0009845">
    <property type="term" value="P:seed germination"/>
    <property type="evidence" value="ECO:0000315"/>
    <property type="project" value="TAIR"/>
</dbReference>
<dbReference type="CDD" id="cd04714">
    <property type="entry name" value="BAH_BAHCC1"/>
    <property type="match status" value="1"/>
</dbReference>
<dbReference type="DisProt" id="DP02690"/>
<dbReference type="FunFam" id="3.30.40.10:FF:000561">
    <property type="entry name" value="Bromo-adjacent homology (BAH) domain-containing protein"/>
    <property type="match status" value="1"/>
</dbReference>
<dbReference type="FunFam" id="2.30.30.490:FF:000019">
    <property type="entry name" value="Chromatin remodeling protein EBS"/>
    <property type="match status" value="1"/>
</dbReference>
<dbReference type="Gene3D" id="2.30.30.490">
    <property type="match status" value="1"/>
</dbReference>
<dbReference type="Gene3D" id="3.30.40.10">
    <property type="entry name" value="Zinc/RING finger domain, C3HC4 (zinc finger)"/>
    <property type="match status" value="1"/>
</dbReference>
<dbReference type="InterPro" id="IPR001025">
    <property type="entry name" value="BAH_dom"/>
</dbReference>
<dbReference type="InterPro" id="IPR043151">
    <property type="entry name" value="BAH_sf"/>
</dbReference>
<dbReference type="InterPro" id="IPR019786">
    <property type="entry name" value="Zinc_finger_PHD-type_CS"/>
</dbReference>
<dbReference type="InterPro" id="IPR011011">
    <property type="entry name" value="Znf_FYVE_PHD"/>
</dbReference>
<dbReference type="InterPro" id="IPR001965">
    <property type="entry name" value="Znf_PHD"/>
</dbReference>
<dbReference type="InterPro" id="IPR019787">
    <property type="entry name" value="Znf_PHD-finger"/>
</dbReference>
<dbReference type="InterPro" id="IPR013083">
    <property type="entry name" value="Znf_RING/FYVE/PHD"/>
</dbReference>
<dbReference type="PANTHER" id="PTHR46364">
    <property type="entry name" value="OS08G0421900 PROTEIN"/>
    <property type="match status" value="1"/>
</dbReference>
<dbReference type="Pfam" id="PF01426">
    <property type="entry name" value="BAH"/>
    <property type="match status" value="1"/>
</dbReference>
<dbReference type="Pfam" id="PF00628">
    <property type="entry name" value="PHD"/>
    <property type="match status" value="1"/>
</dbReference>
<dbReference type="SMART" id="SM00439">
    <property type="entry name" value="BAH"/>
    <property type="match status" value="1"/>
</dbReference>
<dbReference type="SMART" id="SM00249">
    <property type="entry name" value="PHD"/>
    <property type="match status" value="1"/>
</dbReference>
<dbReference type="SUPFAM" id="SSF57903">
    <property type="entry name" value="FYVE/PHD zinc finger"/>
    <property type="match status" value="1"/>
</dbReference>
<dbReference type="PROSITE" id="PS51038">
    <property type="entry name" value="BAH"/>
    <property type="match status" value="1"/>
</dbReference>
<dbReference type="PROSITE" id="PS01359">
    <property type="entry name" value="ZF_PHD_1"/>
    <property type="match status" value="1"/>
</dbReference>
<dbReference type="PROSITE" id="PS50016">
    <property type="entry name" value="ZF_PHD_2"/>
    <property type="match status" value="1"/>
</dbReference>
<proteinExistence type="evidence at protein level"/>
<gene>
    <name evidence="6" type="primary">EBS</name>
    <name evidence="8" type="ordered locus">At4g22140</name>
    <name evidence="9" type="ORF">F1N20.240</name>
</gene>
<keyword id="KW-0002">3D-structure</keyword>
<keyword id="KW-0025">Alternative splicing</keyword>
<keyword id="KW-0156">Chromatin regulator</keyword>
<keyword id="KW-0287">Flowering</keyword>
<keyword id="KW-0479">Metal-binding</keyword>
<keyword id="KW-0539">Nucleus</keyword>
<keyword id="KW-1185">Reference proteome</keyword>
<keyword id="KW-0804">Transcription</keyword>
<keyword id="KW-0805">Transcription regulation</keyword>
<keyword id="KW-0862">Zinc</keyword>
<keyword id="KW-0863">Zinc-finger</keyword>